<feature type="chain" id="PRO_0000287324" description="Alanine dehydrogenase">
    <location>
        <begin position="1"/>
        <end position="373"/>
    </location>
</feature>
<feature type="active site" description="Proton donor/acceptor" evidence="2">
    <location>
        <position position="95"/>
    </location>
</feature>
<feature type="active site" description="Proton donor/acceptor" evidence="1">
    <location>
        <position position="269"/>
    </location>
</feature>
<feature type="binding site" evidence="1">
    <location>
        <position position="15"/>
    </location>
    <ligand>
        <name>substrate</name>
    </ligand>
</feature>
<feature type="binding site" evidence="1">
    <location>
        <position position="74"/>
    </location>
    <ligand>
        <name>substrate</name>
    </ligand>
</feature>
<feature type="binding site" evidence="1">
    <location>
        <position position="133"/>
    </location>
    <ligand>
        <name>NAD(+)</name>
        <dbReference type="ChEBI" id="CHEBI:57540"/>
    </ligand>
</feature>
<feature type="binding site" evidence="1">
    <location>
        <begin position="177"/>
        <end position="178"/>
    </location>
    <ligand>
        <name>NAD(+)</name>
        <dbReference type="ChEBI" id="CHEBI:57540"/>
    </ligand>
</feature>
<feature type="binding site" evidence="1">
    <location>
        <position position="197"/>
    </location>
    <ligand>
        <name>NAD(+)</name>
        <dbReference type="ChEBI" id="CHEBI:57540"/>
    </ligand>
</feature>
<feature type="binding site" evidence="1">
    <location>
        <position position="219"/>
    </location>
    <ligand>
        <name>NAD(+)</name>
        <dbReference type="ChEBI" id="CHEBI:57540"/>
    </ligand>
</feature>
<feature type="binding site" evidence="1">
    <location>
        <begin position="238"/>
        <end position="239"/>
    </location>
    <ligand>
        <name>NAD(+)</name>
        <dbReference type="ChEBI" id="CHEBI:57540"/>
    </ligand>
</feature>
<feature type="binding site" evidence="1">
    <location>
        <begin position="266"/>
        <end position="269"/>
    </location>
    <ligand>
        <name>NAD(+)</name>
        <dbReference type="ChEBI" id="CHEBI:57540"/>
    </ligand>
</feature>
<feature type="binding site" evidence="1">
    <location>
        <begin position="298"/>
        <end position="301"/>
    </location>
    <ligand>
        <name>NAD(+)</name>
        <dbReference type="ChEBI" id="CHEBI:57540"/>
    </ligand>
</feature>
<evidence type="ECO:0000250" key="1"/>
<evidence type="ECO:0000255" key="2"/>
<evidence type="ECO:0000305" key="3"/>
<accession>Q4L750</accession>
<name>DHA_STAHJ</name>
<dbReference type="EC" id="1.4.1.1"/>
<dbReference type="EMBL" id="AP006716">
    <property type="protein sequence ID" value="BAE04525.1"/>
    <property type="molecule type" value="Genomic_DNA"/>
</dbReference>
<dbReference type="RefSeq" id="WP_011275515.1">
    <property type="nucleotide sequence ID" value="NC_007168.1"/>
</dbReference>
<dbReference type="SMR" id="Q4L750"/>
<dbReference type="GeneID" id="93780625"/>
<dbReference type="KEGG" id="sha:SH1216"/>
<dbReference type="eggNOG" id="COG0686">
    <property type="taxonomic scope" value="Bacteria"/>
</dbReference>
<dbReference type="HOGENOM" id="CLU_003376_3_0_9"/>
<dbReference type="OrthoDB" id="9804592at2"/>
<dbReference type="UniPathway" id="UPA00527">
    <property type="reaction ID" value="UER00585"/>
</dbReference>
<dbReference type="Proteomes" id="UP000000543">
    <property type="component" value="Chromosome"/>
</dbReference>
<dbReference type="GO" id="GO:0005829">
    <property type="term" value="C:cytosol"/>
    <property type="evidence" value="ECO:0000250"/>
    <property type="project" value="UniProtKB"/>
</dbReference>
<dbReference type="GO" id="GO:0005886">
    <property type="term" value="C:plasma membrane"/>
    <property type="evidence" value="ECO:0007669"/>
    <property type="project" value="TreeGrafter"/>
</dbReference>
<dbReference type="GO" id="GO:0000286">
    <property type="term" value="F:alanine dehydrogenase activity"/>
    <property type="evidence" value="ECO:0000250"/>
    <property type="project" value="UniProtKB"/>
</dbReference>
<dbReference type="GO" id="GO:0000166">
    <property type="term" value="F:nucleotide binding"/>
    <property type="evidence" value="ECO:0007669"/>
    <property type="project" value="UniProtKB-KW"/>
</dbReference>
<dbReference type="GO" id="GO:0006524">
    <property type="term" value="P:alanine catabolic process"/>
    <property type="evidence" value="ECO:0000250"/>
    <property type="project" value="UniProtKB"/>
</dbReference>
<dbReference type="GO" id="GO:0042853">
    <property type="term" value="P:L-alanine catabolic process"/>
    <property type="evidence" value="ECO:0007669"/>
    <property type="project" value="UniProtKB-UniPathway"/>
</dbReference>
<dbReference type="CDD" id="cd05305">
    <property type="entry name" value="L-AlaDH"/>
    <property type="match status" value="1"/>
</dbReference>
<dbReference type="FunFam" id="3.40.50.720:FF:000049">
    <property type="entry name" value="Alanine dehydrogenase"/>
    <property type="match status" value="1"/>
</dbReference>
<dbReference type="Gene3D" id="3.40.50.720">
    <property type="entry name" value="NAD(P)-binding Rossmann-like Domain"/>
    <property type="match status" value="2"/>
</dbReference>
<dbReference type="InterPro" id="IPR008141">
    <property type="entry name" value="Ala_DH"/>
</dbReference>
<dbReference type="InterPro" id="IPR008143">
    <property type="entry name" value="Ala_DH/PNT_CS2"/>
</dbReference>
<dbReference type="InterPro" id="IPR008142">
    <property type="entry name" value="AlaDH/PNT_CS1"/>
</dbReference>
<dbReference type="InterPro" id="IPR007886">
    <property type="entry name" value="AlaDH/PNT_N"/>
</dbReference>
<dbReference type="InterPro" id="IPR007698">
    <property type="entry name" value="AlaDH/PNT_NAD(H)-bd"/>
</dbReference>
<dbReference type="InterPro" id="IPR036291">
    <property type="entry name" value="NAD(P)-bd_dom_sf"/>
</dbReference>
<dbReference type="NCBIfam" id="TIGR00518">
    <property type="entry name" value="alaDH"/>
    <property type="match status" value="1"/>
</dbReference>
<dbReference type="PANTHER" id="PTHR42795">
    <property type="entry name" value="ALANINE DEHYDROGENASE"/>
    <property type="match status" value="1"/>
</dbReference>
<dbReference type="PANTHER" id="PTHR42795:SF1">
    <property type="entry name" value="ALANINE DEHYDROGENASE"/>
    <property type="match status" value="1"/>
</dbReference>
<dbReference type="Pfam" id="PF01262">
    <property type="entry name" value="AlaDh_PNT_C"/>
    <property type="match status" value="1"/>
</dbReference>
<dbReference type="Pfam" id="PF05222">
    <property type="entry name" value="AlaDh_PNT_N"/>
    <property type="match status" value="1"/>
</dbReference>
<dbReference type="PIRSF" id="PIRSF000183">
    <property type="entry name" value="Alanine_dh"/>
    <property type="match status" value="1"/>
</dbReference>
<dbReference type="SMART" id="SM01002">
    <property type="entry name" value="AlaDh_PNT_C"/>
    <property type="match status" value="1"/>
</dbReference>
<dbReference type="SMART" id="SM01003">
    <property type="entry name" value="AlaDh_PNT_N"/>
    <property type="match status" value="1"/>
</dbReference>
<dbReference type="SUPFAM" id="SSF52283">
    <property type="entry name" value="Formate/glycerate dehydrogenase catalytic domain-like"/>
    <property type="match status" value="1"/>
</dbReference>
<dbReference type="SUPFAM" id="SSF51735">
    <property type="entry name" value="NAD(P)-binding Rossmann-fold domains"/>
    <property type="match status" value="1"/>
</dbReference>
<dbReference type="PROSITE" id="PS00836">
    <property type="entry name" value="ALADH_PNT_1"/>
    <property type="match status" value="1"/>
</dbReference>
<dbReference type="PROSITE" id="PS00837">
    <property type="entry name" value="ALADH_PNT_2"/>
    <property type="match status" value="1"/>
</dbReference>
<proteinExistence type="inferred from homology"/>
<sequence length="373" mass="39966">MKIGIPKEIKNNENRVGLSPSGVHALVEQGHTVLVEKDAGLGSFFEDKDYKDAGADIVSEQSSVWDVEMVIKVKEPLEEEYKYFKEGLILFTYLHLANEEKLTQALVDNKVVGIAYETVQLPDRSLPLLTPMSEVAGRMSAQVGSQFLQKFNGGMGILLGGVPGVPKGKVSIIGGGQAGTNAAKIALGLGANVTILDVNPKRLAELDDLFDGRVNTIMSNPLNIENAVKESDLVIGAVLIPGAKAPSLVTEDMIKQMKDGSVIVDIAIDQGGIFETTDKITTHDDPTYVKHGVVHYAVANMPGAVPRTSTIALNNATLPYAQLLASKGYREAFKANHALSLGLNTYKGHVTHKGVAEAFGLEYTSVEDALKED</sequence>
<reference key="1">
    <citation type="journal article" date="2005" name="J. Bacteriol.">
        <title>Whole-genome sequencing of Staphylococcus haemolyticus uncovers the extreme plasticity of its genome and the evolution of human-colonizing staphylococcal species.</title>
        <authorList>
            <person name="Takeuchi F."/>
            <person name="Watanabe S."/>
            <person name="Baba T."/>
            <person name="Yuzawa H."/>
            <person name="Ito T."/>
            <person name="Morimoto Y."/>
            <person name="Kuroda M."/>
            <person name="Cui L."/>
            <person name="Takahashi M."/>
            <person name="Ankai A."/>
            <person name="Baba S."/>
            <person name="Fukui S."/>
            <person name="Lee J.C."/>
            <person name="Hiramatsu K."/>
        </authorList>
    </citation>
    <scope>NUCLEOTIDE SEQUENCE [LARGE SCALE GENOMIC DNA]</scope>
    <source>
        <strain>JCSC1435</strain>
    </source>
</reference>
<comment type="function">
    <text evidence="1">Catalyzes the reversible reductive amination of pyruvate to L-alanine. May play a role in cell wall synthesis as L-alanine is an important constituent of the peptidoglycan layer (By similarity).</text>
</comment>
<comment type="catalytic activity">
    <reaction>
        <text>L-alanine + NAD(+) + H2O = pyruvate + NH4(+) + NADH + H(+)</text>
        <dbReference type="Rhea" id="RHEA:18405"/>
        <dbReference type="ChEBI" id="CHEBI:15361"/>
        <dbReference type="ChEBI" id="CHEBI:15377"/>
        <dbReference type="ChEBI" id="CHEBI:15378"/>
        <dbReference type="ChEBI" id="CHEBI:28938"/>
        <dbReference type="ChEBI" id="CHEBI:57540"/>
        <dbReference type="ChEBI" id="CHEBI:57945"/>
        <dbReference type="ChEBI" id="CHEBI:57972"/>
        <dbReference type="EC" id="1.4.1.1"/>
    </reaction>
</comment>
<comment type="pathway">
    <text>Amino-acid degradation; L-alanine degradation via dehydrogenase pathway; NH(3) and pyruvate from L-alanine: step 1/1.</text>
</comment>
<comment type="subunit">
    <text evidence="1">Homohexamer. Trimer of dimer (By similarity).</text>
</comment>
<comment type="similarity">
    <text evidence="3">Belongs to the AlaDH/PNT family.</text>
</comment>
<keyword id="KW-0520">NAD</keyword>
<keyword id="KW-0547">Nucleotide-binding</keyword>
<keyword id="KW-0560">Oxidoreductase</keyword>
<gene>
    <name type="primary">ald</name>
    <name type="ordered locus">SH1216</name>
</gene>
<organism>
    <name type="scientific">Staphylococcus haemolyticus (strain JCSC1435)</name>
    <dbReference type="NCBI Taxonomy" id="279808"/>
    <lineage>
        <taxon>Bacteria</taxon>
        <taxon>Bacillati</taxon>
        <taxon>Bacillota</taxon>
        <taxon>Bacilli</taxon>
        <taxon>Bacillales</taxon>
        <taxon>Staphylococcaceae</taxon>
        <taxon>Staphylococcus</taxon>
    </lineage>
</organism>
<protein>
    <recommendedName>
        <fullName>Alanine dehydrogenase</fullName>
        <ecNumber>1.4.1.1</ecNumber>
    </recommendedName>
</protein>